<proteinExistence type="evidence at protein level"/>
<feature type="chain" id="PRO_0000233240" description="STE20-like serine/threonine-protein kinase">
    <location>
        <begin position="1"/>
        <end position="1233"/>
    </location>
</feature>
<feature type="domain" description="Protein kinase" evidence="4">
    <location>
        <begin position="34"/>
        <end position="292"/>
    </location>
</feature>
<feature type="domain" description="UVR" evidence="5">
    <location>
        <begin position="873"/>
        <end position="908"/>
    </location>
</feature>
<feature type="region of interest" description="Disordered" evidence="7">
    <location>
        <begin position="309"/>
        <end position="351"/>
    </location>
</feature>
<feature type="region of interest" description="Disordered" evidence="7">
    <location>
        <begin position="363"/>
        <end position="453"/>
    </location>
</feature>
<feature type="region of interest" description="Disordered" evidence="7">
    <location>
        <begin position="498"/>
        <end position="650"/>
    </location>
</feature>
<feature type="region of interest" description="Disordered" evidence="7">
    <location>
        <begin position="663"/>
        <end position="761"/>
    </location>
</feature>
<feature type="region of interest" description="Disordered" evidence="7">
    <location>
        <begin position="772"/>
        <end position="791"/>
    </location>
</feature>
<feature type="region of interest" description="Disordered" evidence="7">
    <location>
        <begin position="944"/>
        <end position="963"/>
    </location>
</feature>
<feature type="region of interest" description="Disordered" evidence="7">
    <location>
        <begin position="1109"/>
        <end position="1129"/>
    </location>
</feature>
<feature type="coiled-coil region" evidence="3">
    <location>
        <begin position="824"/>
        <end position="1067"/>
    </location>
</feature>
<feature type="coiled-coil region" evidence="3">
    <location>
        <begin position="1107"/>
        <end position="1181"/>
    </location>
</feature>
<feature type="compositionally biased region" description="Acidic residues" evidence="7">
    <location>
        <begin position="312"/>
        <end position="328"/>
    </location>
</feature>
<feature type="compositionally biased region" description="Basic and acidic residues" evidence="7">
    <location>
        <begin position="363"/>
        <end position="399"/>
    </location>
</feature>
<feature type="compositionally biased region" description="Polar residues" evidence="7">
    <location>
        <begin position="432"/>
        <end position="441"/>
    </location>
</feature>
<feature type="compositionally biased region" description="Basic and acidic residues" evidence="7">
    <location>
        <begin position="518"/>
        <end position="529"/>
    </location>
</feature>
<feature type="compositionally biased region" description="Basic and acidic residues" evidence="7">
    <location>
        <begin position="598"/>
        <end position="607"/>
    </location>
</feature>
<feature type="compositionally biased region" description="Polar residues" evidence="7">
    <location>
        <begin position="619"/>
        <end position="630"/>
    </location>
</feature>
<feature type="compositionally biased region" description="Low complexity" evidence="7">
    <location>
        <begin position="690"/>
        <end position="701"/>
    </location>
</feature>
<feature type="compositionally biased region" description="Polar residues" evidence="7">
    <location>
        <begin position="746"/>
        <end position="761"/>
    </location>
</feature>
<feature type="compositionally biased region" description="Low complexity" evidence="7">
    <location>
        <begin position="954"/>
        <end position="963"/>
    </location>
</feature>
<feature type="active site" description="Proton acceptor" evidence="4 6">
    <location>
        <position position="155"/>
    </location>
</feature>
<feature type="binding site" evidence="4">
    <location>
        <begin position="40"/>
        <end position="48"/>
    </location>
    <ligand>
        <name>ATP</name>
        <dbReference type="ChEBI" id="CHEBI:30616"/>
    </ligand>
</feature>
<feature type="binding site" evidence="4">
    <location>
        <position position="63"/>
    </location>
    <ligand>
        <name>ATP</name>
        <dbReference type="ChEBI" id="CHEBI:30616"/>
    </ligand>
</feature>
<feature type="site" description="Cleavage; by caspase-3" evidence="13">
    <location>
        <begin position="436"/>
        <end position="437"/>
    </location>
</feature>
<feature type="modified residue" description="Phosphoserine" evidence="2">
    <location>
        <position position="14"/>
    </location>
</feature>
<feature type="modified residue" description="Phosphothreonine" evidence="16">
    <location>
        <position position="183"/>
    </location>
</feature>
<feature type="modified residue" description="Phosphoserine" evidence="14 16">
    <location>
        <position position="189"/>
    </location>
</feature>
<feature type="modified residue" description="Phosphoserine" evidence="1">
    <location>
        <position position="340"/>
    </location>
</feature>
<feature type="modified residue" description="Phosphoserine" evidence="2">
    <location>
        <position position="341"/>
    </location>
</feature>
<feature type="modified residue" description="Phosphoserine" evidence="16">
    <location>
        <position position="344"/>
    </location>
</feature>
<feature type="modified residue" description="Phosphoserine" evidence="16">
    <location>
        <position position="347"/>
    </location>
</feature>
<feature type="modified residue" description="Phosphoserine" evidence="16">
    <location>
        <position position="348"/>
    </location>
</feature>
<feature type="modified residue" description="Phosphoserine" evidence="15 16">
    <location>
        <position position="354"/>
    </location>
</feature>
<feature type="modified residue" description="Phosphoserine" evidence="2">
    <location>
        <position position="372"/>
    </location>
</feature>
<feature type="modified residue" description="Phosphoserine" evidence="16">
    <location>
        <position position="543"/>
    </location>
</feature>
<feature type="modified residue" description="Phosphoserine" evidence="2">
    <location>
        <position position="561"/>
    </location>
</feature>
<feature type="modified residue" description="Phosphoserine" evidence="2">
    <location>
        <position position="566"/>
    </location>
</feature>
<feature type="modified residue" description="Phosphoserine" evidence="16">
    <location>
        <position position="643"/>
    </location>
</feature>
<feature type="modified residue" description="Phosphoserine" evidence="16">
    <location>
        <position position="647"/>
    </location>
</feature>
<feature type="modified residue" description="Phosphoserine" evidence="16">
    <location>
        <position position="666"/>
    </location>
</feature>
<feature type="modified residue" description="Phosphoserine" evidence="2">
    <location>
        <position position="775"/>
    </location>
</feature>
<feature type="modified residue" description="Phosphoserine" evidence="16">
    <location>
        <position position="777"/>
    </location>
</feature>
<feature type="modified residue" description="Phosphothreonine" evidence="16">
    <location>
        <position position="812"/>
    </location>
</feature>
<feature type="modified residue" description="Phosphoserine" evidence="16">
    <location>
        <position position="816"/>
    </location>
</feature>
<feature type="modified residue" description="Phosphothreonine" evidence="2">
    <location>
        <position position="1095"/>
    </location>
</feature>
<feature type="splice variant" id="VSP_018101" description="In isoform 2." evidence="11 12">
    <location>
        <begin position="927"/>
        <end position="957"/>
    </location>
</feature>
<feature type="mutagenesis site" description="No change in caspase-3-induced cleavage product." evidence="8">
    <original>D</original>
    <variation>N</variation>
    <location>
        <position position="436"/>
    </location>
</feature>
<feature type="sequence conflict" description="In Ref. 7." evidence="13" ref="7">
    <original>T</original>
    <variation>N</variation>
    <location>
        <position position="164"/>
    </location>
</feature>
<feature type="sequence conflict" description="In Ref. 1; AAB96682." evidence="13" ref="1">
    <original>A</original>
    <variation>V</variation>
    <location>
        <position position="574"/>
    </location>
</feature>
<feature type="sequence conflict" description="In Ref. 2; BAC29874." evidence="13" ref="2">
    <original>Q</original>
    <variation>K</variation>
    <location>
        <position position="1098"/>
    </location>
</feature>
<gene>
    <name type="primary">Slk</name>
    <name type="synonym">Kiaa0204</name>
    <name type="synonym">Stk2</name>
</gene>
<comment type="function">
    <text evidence="8">Mediates apoptosis and actin stress fiber dissolution.</text>
</comment>
<comment type="catalytic activity">
    <reaction>
        <text>L-seryl-[protein] + ATP = O-phospho-L-seryl-[protein] + ADP + H(+)</text>
        <dbReference type="Rhea" id="RHEA:17989"/>
        <dbReference type="Rhea" id="RHEA-COMP:9863"/>
        <dbReference type="Rhea" id="RHEA-COMP:11604"/>
        <dbReference type="ChEBI" id="CHEBI:15378"/>
        <dbReference type="ChEBI" id="CHEBI:29999"/>
        <dbReference type="ChEBI" id="CHEBI:30616"/>
        <dbReference type="ChEBI" id="CHEBI:83421"/>
        <dbReference type="ChEBI" id="CHEBI:456216"/>
        <dbReference type="EC" id="2.7.11.1"/>
    </reaction>
</comment>
<comment type="catalytic activity">
    <reaction>
        <text>L-threonyl-[protein] + ATP = O-phospho-L-threonyl-[protein] + ADP + H(+)</text>
        <dbReference type="Rhea" id="RHEA:46608"/>
        <dbReference type="Rhea" id="RHEA-COMP:11060"/>
        <dbReference type="Rhea" id="RHEA-COMP:11605"/>
        <dbReference type="ChEBI" id="CHEBI:15378"/>
        <dbReference type="ChEBI" id="CHEBI:30013"/>
        <dbReference type="ChEBI" id="CHEBI:30616"/>
        <dbReference type="ChEBI" id="CHEBI:61977"/>
        <dbReference type="ChEBI" id="CHEBI:456216"/>
        <dbReference type="EC" id="2.7.11.1"/>
    </reaction>
</comment>
<comment type="subcellular location">
    <subcellularLocation>
        <location evidence="8 10">Cytoplasm</location>
    </subcellularLocation>
</comment>
<comment type="alternative products">
    <event type="alternative splicing"/>
    <isoform>
        <id>O54988-1</id>
        <name>1</name>
        <sequence type="displayed"/>
    </isoform>
    <isoform>
        <id>O54988-2</id>
        <name>2</name>
        <sequence type="described" ref="VSP_018101"/>
    </isoform>
</comment>
<comment type="tissue specificity">
    <text evidence="8 9 10">Ubiquitously expressed.</text>
</comment>
<comment type="developmental stage">
    <text evidence="10">Ubiquitously expressed from day 7 to 17 dpc.</text>
</comment>
<comment type="PTM">
    <text evidence="8">Proteolytically cleaved by caspase-3.</text>
</comment>
<comment type="PTM">
    <text evidence="10">Autophosphorylated.</text>
</comment>
<comment type="similarity">
    <text evidence="13">Belongs to the protein kinase superfamily. STE Ser/Thr protein kinase family. STE20 subfamily.</text>
</comment>
<comment type="sequence caution" evidence="13">
    <conflict type="erroneous initiation">
        <sequence resource="EMBL-CDS" id="BAC65500"/>
    </conflict>
</comment>
<organism>
    <name type="scientific">Mus musculus</name>
    <name type="common">Mouse</name>
    <dbReference type="NCBI Taxonomy" id="10090"/>
    <lineage>
        <taxon>Eukaryota</taxon>
        <taxon>Metazoa</taxon>
        <taxon>Chordata</taxon>
        <taxon>Craniata</taxon>
        <taxon>Vertebrata</taxon>
        <taxon>Euteleostomi</taxon>
        <taxon>Mammalia</taxon>
        <taxon>Eutheria</taxon>
        <taxon>Euarchontoglires</taxon>
        <taxon>Glires</taxon>
        <taxon>Rodentia</taxon>
        <taxon>Myomorpha</taxon>
        <taxon>Muroidea</taxon>
        <taxon>Muridae</taxon>
        <taxon>Murinae</taxon>
        <taxon>Mus</taxon>
        <taxon>Mus</taxon>
    </lineage>
</organism>
<name>SLK_MOUSE</name>
<evidence type="ECO:0000250" key="1">
    <source>
        <dbReference type="UniProtKB" id="O08815"/>
    </source>
</evidence>
<evidence type="ECO:0000250" key="2">
    <source>
        <dbReference type="UniProtKB" id="Q9H2G2"/>
    </source>
</evidence>
<evidence type="ECO:0000255" key="3"/>
<evidence type="ECO:0000255" key="4">
    <source>
        <dbReference type="PROSITE-ProRule" id="PRU00159"/>
    </source>
</evidence>
<evidence type="ECO:0000255" key="5">
    <source>
        <dbReference type="PROSITE-ProRule" id="PRU00217"/>
    </source>
</evidence>
<evidence type="ECO:0000255" key="6">
    <source>
        <dbReference type="PROSITE-ProRule" id="PRU10027"/>
    </source>
</evidence>
<evidence type="ECO:0000256" key="7">
    <source>
        <dbReference type="SAM" id="MobiDB-lite"/>
    </source>
</evidence>
<evidence type="ECO:0000269" key="8">
    <source>
    </source>
</evidence>
<evidence type="ECO:0000269" key="9">
    <source>
    </source>
</evidence>
<evidence type="ECO:0000269" key="10">
    <source>
    </source>
</evidence>
<evidence type="ECO:0000303" key="11">
    <source>
    </source>
</evidence>
<evidence type="ECO:0000303" key="12">
    <source>
    </source>
</evidence>
<evidence type="ECO:0000305" key="13"/>
<evidence type="ECO:0007744" key="14">
    <source>
    </source>
</evidence>
<evidence type="ECO:0007744" key="15">
    <source>
    </source>
</evidence>
<evidence type="ECO:0007744" key="16">
    <source>
    </source>
</evidence>
<dbReference type="EC" id="2.7.11.1"/>
<dbReference type="EMBL" id="AF039574">
    <property type="protein sequence ID" value="AAB96682.1"/>
    <property type="molecule type" value="mRNA"/>
</dbReference>
<dbReference type="EMBL" id="AF112855">
    <property type="protein sequence ID" value="AAD28717.1"/>
    <property type="molecule type" value="mRNA"/>
</dbReference>
<dbReference type="EMBL" id="AK037798">
    <property type="protein sequence ID" value="BAC29874.1"/>
    <property type="molecule type" value="mRNA"/>
</dbReference>
<dbReference type="EMBL" id="AK122218">
    <property type="protein sequence ID" value="BAC65500.1"/>
    <property type="status" value="ALT_INIT"/>
    <property type="molecule type" value="mRNA"/>
</dbReference>
<dbReference type="EMBL" id="BC131675">
    <property type="protein sequence ID" value="AAI31676.1"/>
    <property type="molecule type" value="mRNA"/>
</dbReference>
<dbReference type="EMBL" id="AK029491">
    <property type="protein sequence ID" value="BAC26474.1"/>
    <property type="molecule type" value="mRNA"/>
</dbReference>
<dbReference type="CCDS" id="CCDS38017.1">
    <molecule id="O54988-1"/>
</dbReference>
<dbReference type="CCDS" id="CCDS50465.1">
    <molecule id="O54988-2"/>
</dbReference>
<dbReference type="PIR" id="T14157">
    <property type="entry name" value="T14157"/>
</dbReference>
<dbReference type="RefSeq" id="NP_001158111.1">
    <molecule id="O54988-2"/>
    <property type="nucleotide sequence ID" value="NM_001164639.1"/>
</dbReference>
<dbReference type="RefSeq" id="NP_033315.2">
    <molecule id="O54988-1"/>
    <property type="nucleotide sequence ID" value="NM_009289.3"/>
</dbReference>
<dbReference type="SMR" id="O54988"/>
<dbReference type="BioGRID" id="203546">
    <property type="interactions" value="7"/>
</dbReference>
<dbReference type="FunCoup" id="O54988">
    <property type="interactions" value="3095"/>
</dbReference>
<dbReference type="IntAct" id="O54988">
    <property type="interactions" value="1"/>
</dbReference>
<dbReference type="STRING" id="10090.ENSMUSP00000049977"/>
<dbReference type="ChEMBL" id="CHEMBL2176844"/>
<dbReference type="GlyGen" id="O54988">
    <property type="glycosylation" value="5 sites, 1 N-linked glycan (1 site), 1 O-linked glycan (4 sites)"/>
</dbReference>
<dbReference type="iPTMnet" id="O54988"/>
<dbReference type="PhosphoSitePlus" id="O54988"/>
<dbReference type="SwissPalm" id="O54988"/>
<dbReference type="jPOST" id="O54988"/>
<dbReference type="PaxDb" id="10090-ENSMUSP00000049977"/>
<dbReference type="PeptideAtlas" id="O54988"/>
<dbReference type="ProteomicsDB" id="261081">
    <molecule id="O54988-1"/>
</dbReference>
<dbReference type="ProteomicsDB" id="261082">
    <molecule id="O54988-2"/>
</dbReference>
<dbReference type="Pumba" id="O54988"/>
<dbReference type="Antibodypedia" id="18194">
    <property type="antibodies" value="291 antibodies from 34 providers"/>
</dbReference>
<dbReference type="DNASU" id="20874"/>
<dbReference type="Ensembl" id="ENSMUST00000026043.12">
    <molecule id="O54988-2"/>
    <property type="protein sequence ID" value="ENSMUSP00000026043.6"/>
    <property type="gene ID" value="ENSMUSG00000025060.16"/>
</dbReference>
<dbReference type="Ensembl" id="ENSMUST00000051691.8">
    <molecule id="O54988-1"/>
    <property type="protein sequence ID" value="ENSMUSP00000049977.8"/>
    <property type="gene ID" value="ENSMUSG00000025060.16"/>
</dbReference>
<dbReference type="GeneID" id="20874"/>
<dbReference type="KEGG" id="mmu:20874"/>
<dbReference type="UCSC" id="uc008hvf.2">
    <molecule id="O54988-1"/>
    <property type="organism name" value="mouse"/>
</dbReference>
<dbReference type="AGR" id="MGI:103241"/>
<dbReference type="CTD" id="9748"/>
<dbReference type="MGI" id="MGI:103241">
    <property type="gene designation" value="Slk"/>
</dbReference>
<dbReference type="VEuPathDB" id="HostDB:ENSMUSG00000025060"/>
<dbReference type="eggNOG" id="KOG0579">
    <property type="taxonomic scope" value="Eukaryota"/>
</dbReference>
<dbReference type="GeneTree" id="ENSGT00940000156184"/>
<dbReference type="HOGENOM" id="CLU_001965_3_0_1"/>
<dbReference type="InParanoid" id="O54988"/>
<dbReference type="OMA" id="DESCADS"/>
<dbReference type="OrthoDB" id="10027016at2759"/>
<dbReference type="PhylomeDB" id="O54988"/>
<dbReference type="TreeFam" id="TF351445"/>
<dbReference type="Reactome" id="R-MMU-8980692">
    <property type="pathway name" value="RHOA GTPase cycle"/>
</dbReference>
<dbReference type="Reactome" id="R-MMU-9013026">
    <property type="pathway name" value="RHOB GTPase cycle"/>
</dbReference>
<dbReference type="Reactome" id="R-MMU-9013106">
    <property type="pathway name" value="RHOC GTPase cycle"/>
</dbReference>
<dbReference type="BioGRID-ORCS" id="20874">
    <property type="hits" value="3 hits in 77 CRISPR screens"/>
</dbReference>
<dbReference type="ChiTaRS" id="Slk">
    <property type="organism name" value="mouse"/>
</dbReference>
<dbReference type="PRO" id="PR:O54988"/>
<dbReference type="Proteomes" id="UP000000589">
    <property type="component" value="Chromosome 19"/>
</dbReference>
<dbReference type="RNAct" id="O54988">
    <property type="molecule type" value="protein"/>
</dbReference>
<dbReference type="Bgee" id="ENSMUSG00000025060">
    <property type="expression patterns" value="Expressed in ileal epithelium and 272 other cell types or tissues"/>
</dbReference>
<dbReference type="ExpressionAtlas" id="O54988">
    <property type="expression patterns" value="baseline and differential"/>
</dbReference>
<dbReference type="GO" id="GO:0031252">
    <property type="term" value="C:cell leading edge"/>
    <property type="evidence" value="ECO:0000314"/>
    <property type="project" value="UniProtKB"/>
</dbReference>
<dbReference type="GO" id="GO:0005737">
    <property type="term" value="C:cytoplasm"/>
    <property type="evidence" value="ECO:0000250"/>
    <property type="project" value="UniProtKB"/>
</dbReference>
<dbReference type="GO" id="GO:0048471">
    <property type="term" value="C:perinuclear region of cytoplasm"/>
    <property type="evidence" value="ECO:0000250"/>
    <property type="project" value="UniProtKB"/>
</dbReference>
<dbReference type="GO" id="GO:0005524">
    <property type="term" value="F:ATP binding"/>
    <property type="evidence" value="ECO:0007669"/>
    <property type="project" value="UniProtKB-KW"/>
</dbReference>
<dbReference type="GO" id="GO:0042803">
    <property type="term" value="F:protein homodimerization activity"/>
    <property type="evidence" value="ECO:0000250"/>
    <property type="project" value="UniProtKB"/>
</dbReference>
<dbReference type="GO" id="GO:0106310">
    <property type="term" value="F:protein serine kinase activity"/>
    <property type="evidence" value="ECO:0007669"/>
    <property type="project" value="RHEA"/>
</dbReference>
<dbReference type="GO" id="GO:0004674">
    <property type="term" value="F:protein serine/threonine kinase activity"/>
    <property type="evidence" value="ECO:0000250"/>
    <property type="project" value="UniProtKB"/>
</dbReference>
<dbReference type="GO" id="GO:0006915">
    <property type="term" value="P:apoptotic process"/>
    <property type="evidence" value="ECO:0007669"/>
    <property type="project" value="UniProtKB-KW"/>
</dbReference>
<dbReference type="GO" id="GO:0031122">
    <property type="term" value="P:cytoplasmic microtubule organization"/>
    <property type="evidence" value="ECO:0007669"/>
    <property type="project" value="Ensembl"/>
</dbReference>
<dbReference type="GO" id="GO:0046777">
    <property type="term" value="P:protein autophosphorylation"/>
    <property type="evidence" value="ECO:0000250"/>
    <property type="project" value="UniProtKB"/>
</dbReference>
<dbReference type="GO" id="GO:0042981">
    <property type="term" value="P:regulation of apoptotic process"/>
    <property type="evidence" value="ECO:0007669"/>
    <property type="project" value="Ensembl"/>
</dbReference>
<dbReference type="GO" id="GO:0030334">
    <property type="term" value="P:regulation of cell migration"/>
    <property type="evidence" value="ECO:0000315"/>
    <property type="project" value="UniProtKB"/>
</dbReference>
<dbReference type="GO" id="GO:0051893">
    <property type="term" value="P:regulation of focal adhesion assembly"/>
    <property type="evidence" value="ECO:0000250"/>
    <property type="project" value="UniProtKB"/>
</dbReference>
<dbReference type="CDD" id="cd06643">
    <property type="entry name" value="STKc_SLK"/>
    <property type="match status" value="1"/>
</dbReference>
<dbReference type="FunFam" id="1.10.510.10:FF:000081">
    <property type="entry name" value="STE20-like serine/threonine-protein kinase"/>
    <property type="match status" value="1"/>
</dbReference>
<dbReference type="FunFam" id="3.30.200.20:FF:000120">
    <property type="entry name" value="STE20-like serine/threonine-protein kinase"/>
    <property type="match status" value="1"/>
</dbReference>
<dbReference type="Gene3D" id="3.30.200.20">
    <property type="entry name" value="Phosphorylase Kinase, domain 1"/>
    <property type="match status" value="1"/>
</dbReference>
<dbReference type="Gene3D" id="1.10.510.10">
    <property type="entry name" value="Transferase(Phosphotransferase) domain 1"/>
    <property type="match status" value="1"/>
</dbReference>
<dbReference type="InterPro" id="IPR011009">
    <property type="entry name" value="Kinase-like_dom_sf"/>
</dbReference>
<dbReference type="InterPro" id="IPR022165">
    <property type="entry name" value="PKK"/>
</dbReference>
<dbReference type="InterPro" id="IPR000719">
    <property type="entry name" value="Prot_kinase_dom"/>
</dbReference>
<dbReference type="InterPro" id="IPR017441">
    <property type="entry name" value="Protein_kinase_ATP_BS"/>
</dbReference>
<dbReference type="InterPro" id="IPR008271">
    <property type="entry name" value="Ser/Thr_kinase_AS"/>
</dbReference>
<dbReference type="InterPro" id="IPR051585">
    <property type="entry name" value="STE20_Ser/Thr_Kinases"/>
</dbReference>
<dbReference type="InterPro" id="IPR001943">
    <property type="entry name" value="UVR_dom"/>
</dbReference>
<dbReference type="PANTHER" id="PTHR46538:SF1">
    <property type="entry name" value="NON-SPECIFIC SERINE_THREONINE PROTEIN KINASE"/>
    <property type="match status" value="1"/>
</dbReference>
<dbReference type="PANTHER" id="PTHR46538">
    <property type="entry name" value="PROTEIN KINASE DOMAIN-CONTAINING PROTEIN"/>
    <property type="match status" value="1"/>
</dbReference>
<dbReference type="Pfam" id="PF00069">
    <property type="entry name" value="Pkinase"/>
    <property type="match status" value="1"/>
</dbReference>
<dbReference type="Pfam" id="PF12474">
    <property type="entry name" value="PKK"/>
    <property type="match status" value="2"/>
</dbReference>
<dbReference type="SMART" id="SM00220">
    <property type="entry name" value="S_TKc"/>
    <property type="match status" value="1"/>
</dbReference>
<dbReference type="SUPFAM" id="SSF56112">
    <property type="entry name" value="Protein kinase-like (PK-like)"/>
    <property type="match status" value="1"/>
</dbReference>
<dbReference type="PROSITE" id="PS00107">
    <property type="entry name" value="PROTEIN_KINASE_ATP"/>
    <property type="match status" value="1"/>
</dbReference>
<dbReference type="PROSITE" id="PS50011">
    <property type="entry name" value="PROTEIN_KINASE_DOM"/>
    <property type="match status" value="1"/>
</dbReference>
<dbReference type="PROSITE" id="PS00108">
    <property type="entry name" value="PROTEIN_KINASE_ST"/>
    <property type="match status" value="1"/>
</dbReference>
<dbReference type="PROSITE" id="PS50151">
    <property type="entry name" value="UVR"/>
    <property type="match status" value="1"/>
</dbReference>
<reference key="1">
    <citation type="journal article" date="1998" name="Arch. Biochem. Biophys.">
        <title>Identification and initial characterization of mSLK, a murine member of the STE20 family of kinases.</title>
        <authorList>
            <person name="Pytowski B."/>
            <person name="Hicklin D.J."/>
            <person name="Kornhaber G."/>
            <person name="Dellaratta D.V."/>
            <person name="Witte L."/>
        </authorList>
    </citation>
    <scope>NUCLEOTIDE SEQUENCE [MRNA] (ISOFORM 1)</scope>
    <scope>TISSUE SPECIFICITY</scope>
    <scope>PHOSPHORYLATION</scope>
    <scope>DEVELOPMENTAL STAGE</scope>
    <scope>SUBCELLULAR LOCATION</scope>
</reference>
<reference key="2">
    <citation type="journal article" date="2000" name="Mol. Cell. Biol.">
        <title>Caspase 3 cleavage of the Ste20-related kinase SLK releases and activates an apoptosis-inducing kinase domain and an actin-disassembling region.</title>
        <authorList>
            <person name="Sabourin L.A."/>
            <person name="Seale P."/>
            <person name="Wagner J."/>
            <person name="Rudnicki M.A."/>
        </authorList>
    </citation>
    <scope>NUCLEOTIDE SEQUENCE [MRNA] (ISOFORM 2)</scope>
    <scope>TISSUE SPECIFICITY</scope>
    <scope>CLEAVAGE BY CASPASE-3</scope>
    <scope>FUNCTION</scope>
    <scope>SUBCELLULAR LOCATION</scope>
    <scope>MUTAGENESIS OF ASP-436</scope>
    <source>
        <strain>BALB/cJ</strain>
    </source>
</reference>
<reference key="3">
    <citation type="journal article" date="2000" name="Mol. Cell. Biol.">
        <authorList>
            <person name="Sabourin L.A."/>
            <person name="Seale P."/>
            <person name="Wagner J."/>
            <person name="Rudnicki M.A."/>
        </authorList>
    </citation>
    <scope>ERRATUM OF PUBMED:10611247</scope>
</reference>
<reference key="4">
    <citation type="journal article" date="2003" name="DNA Res.">
        <title>Prediction of the coding sequences of mouse homologues of KIAA gene: II. The complete nucleotide sequences of 400 mouse KIAA-homologous cDNAs identified by screening of terminal sequences of cDNA clones randomly sampled from size-fractionated libraries.</title>
        <authorList>
            <person name="Okazaki N."/>
            <person name="Kikuno R."/>
            <person name="Ohara R."/>
            <person name="Inamoto S."/>
            <person name="Aizawa H."/>
            <person name="Yuasa S."/>
            <person name="Nakajima D."/>
            <person name="Nagase T."/>
            <person name="Ohara O."/>
            <person name="Koga H."/>
        </authorList>
    </citation>
    <scope>NUCLEOTIDE SEQUENCE [LARGE SCALE MRNA] (ISOFORM 2)</scope>
    <source>
        <tissue>Brain</tissue>
    </source>
</reference>
<reference key="5">
    <citation type="journal article" date="2004" name="Genome Res.">
        <title>The status, quality, and expansion of the NIH full-length cDNA project: the Mammalian Gene Collection (MGC).</title>
        <authorList>
            <consortium name="The MGC Project Team"/>
        </authorList>
    </citation>
    <scope>NUCLEOTIDE SEQUENCE [LARGE SCALE MRNA] (ISOFORM 1)</scope>
</reference>
<reference key="6">
    <citation type="journal article" date="2005" name="Science">
        <title>The transcriptional landscape of the mammalian genome.</title>
        <authorList>
            <person name="Carninci P."/>
            <person name="Kasukawa T."/>
            <person name="Katayama S."/>
            <person name="Gough J."/>
            <person name="Frith M.C."/>
            <person name="Maeda N."/>
            <person name="Oyama R."/>
            <person name="Ravasi T."/>
            <person name="Lenhard B."/>
            <person name="Wells C."/>
            <person name="Kodzius R."/>
            <person name="Shimokawa K."/>
            <person name="Bajic V.B."/>
            <person name="Brenner S.E."/>
            <person name="Batalov S."/>
            <person name="Forrest A.R."/>
            <person name="Zavolan M."/>
            <person name="Davis M.J."/>
            <person name="Wilming L.G."/>
            <person name="Aidinis V."/>
            <person name="Allen J.E."/>
            <person name="Ambesi-Impiombato A."/>
            <person name="Apweiler R."/>
            <person name="Aturaliya R.N."/>
            <person name="Bailey T.L."/>
            <person name="Bansal M."/>
            <person name="Baxter L."/>
            <person name="Beisel K.W."/>
            <person name="Bersano T."/>
            <person name="Bono H."/>
            <person name="Chalk A.M."/>
            <person name="Chiu K.P."/>
            <person name="Choudhary V."/>
            <person name="Christoffels A."/>
            <person name="Clutterbuck D.R."/>
            <person name="Crowe M.L."/>
            <person name="Dalla E."/>
            <person name="Dalrymple B.P."/>
            <person name="de Bono B."/>
            <person name="Della Gatta G."/>
            <person name="di Bernardo D."/>
            <person name="Down T."/>
            <person name="Engstrom P."/>
            <person name="Fagiolini M."/>
            <person name="Faulkner G."/>
            <person name="Fletcher C.F."/>
            <person name="Fukushima T."/>
            <person name="Furuno M."/>
            <person name="Futaki S."/>
            <person name="Gariboldi M."/>
            <person name="Georgii-Hemming P."/>
            <person name="Gingeras T.R."/>
            <person name="Gojobori T."/>
            <person name="Green R.E."/>
            <person name="Gustincich S."/>
            <person name="Harbers M."/>
            <person name="Hayashi Y."/>
            <person name="Hensch T.K."/>
            <person name="Hirokawa N."/>
            <person name="Hill D."/>
            <person name="Huminiecki L."/>
            <person name="Iacono M."/>
            <person name="Ikeo K."/>
            <person name="Iwama A."/>
            <person name="Ishikawa T."/>
            <person name="Jakt M."/>
            <person name="Kanapin A."/>
            <person name="Katoh M."/>
            <person name="Kawasawa Y."/>
            <person name="Kelso J."/>
            <person name="Kitamura H."/>
            <person name="Kitano H."/>
            <person name="Kollias G."/>
            <person name="Krishnan S.P."/>
            <person name="Kruger A."/>
            <person name="Kummerfeld S.K."/>
            <person name="Kurochkin I.V."/>
            <person name="Lareau L.F."/>
            <person name="Lazarevic D."/>
            <person name="Lipovich L."/>
            <person name="Liu J."/>
            <person name="Liuni S."/>
            <person name="McWilliam S."/>
            <person name="Madan Babu M."/>
            <person name="Madera M."/>
            <person name="Marchionni L."/>
            <person name="Matsuda H."/>
            <person name="Matsuzawa S."/>
            <person name="Miki H."/>
            <person name="Mignone F."/>
            <person name="Miyake S."/>
            <person name="Morris K."/>
            <person name="Mottagui-Tabar S."/>
            <person name="Mulder N."/>
            <person name="Nakano N."/>
            <person name="Nakauchi H."/>
            <person name="Ng P."/>
            <person name="Nilsson R."/>
            <person name="Nishiguchi S."/>
            <person name="Nishikawa S."/>
            <person name="Nori F."/>
            <person name="Ohara O."/>
            <person name="Okazaki Y."/>
            <person name="Orlando V."/>
            <person name="Pang K.C."/>
            <person name="Pavan W.J."/>
            <person name="Pavesi G."/>
            <person name="Pesole G."/>
            <person name="Petrovsky N."/>
            <person name="Piazza S."/>
            <person name="Reed J."/>
            <person name="Reid J.F."/>
            <person name="Ring B.Z."/>
            <person name="Ringwald M."/>
            <person name="Rost B."/>
            <person name="Ruan Y."/>
            <person name="Salzberg S.L."/>
            <person name="Sandelin A."/>
            <person name="Schneider C."/>
            <person name="Schoenbach C."/>
            <person name="Sekiguchi K."/>
            <person name="Semple C.A."/>
            <person name="Seno S."/>
            <person name="Sessa L."/>
            <person name="Sheng Y."/>
            <person name="Shibata Y."/>
            <person name="Shimada H."/>
            <person name="Shimada K."/>
            <person name="Silva D."/>
            <person name="Sinclair B."/>
            <person name="Sperling S."/>
            <person name="Stupka E."/>
            <person name="Sugiura K."/>
            <person name="Sultana R."/>
            <person name="Takenaka Y."/>
            <person name="Taki K."/>
            <person name="Tammoja K."/>
            <person name="Tan S.L."/>
            <person name="Tang S."/>
            <person name="Taylor M.S."/>
            <person name="Tegner J."/>
            <person name="Teichmann S.A."/>
            <person name="Ueda H.R."/>
            <person name="van Nimwegen E."/>
            <person name="Verardo R."/>
            <person name="Wei C.L."/>
            <person name="Yagi K."/>
            <person name="Yamanishi H."/>
            <person name="Zabarovsky E."/>
            <person name="Zhu S."/>
            <person name="Zimmer A."/>
            <person name="Hide W."/>
            <person name="Bult C."/>
            <person name="Grimmond S.M."/>
            <person name="Teasdale R.D."/>
            <person name="Liu E.T."/>
            <person name="Brusic V."/>
            <person name="Quackenbush J."/>
            <person name="Wahlestedt C."/>
            <person name="Mattick J.S."/>
            <person name="Hume D.A."/>
            <person name="Kai C."/>
            <person name="Sasaki D."/>
            <person name="Tomaru Y."/>
            <person name="Fukuda S."/>
            <person name="Kanamori-Katayama M."/>
            <person name="Suzuki M."/>
            <person name="Aoki J."/>
            <person name="Arakawa T."/>
            <person name="Iida J."/>
            <person name="Imamura K."/>
            <person name="Itoh M."/>
            <person name="Kato T."/>
            <person name="Kawaji H."/>
            <person name="Kawagashira N."/>
            <person name="Kawashima T."/>
            <person name="Kojima M."/>
            <person name="Kondo S."/>
            <person name="Konno H."/>
            <person name="Nakano K."/>
            <person name="Ninomiya N."/>
            <person name="Nishio T."/>
            <person name="Okada M."/>
            <person name="Plessy C."/>
            <person name="Shibata K."/>
            <person name="Shiraki T."/>
            <person name="Suzuki S."/>
            <person name="Tagami M."/>
            <person name="Waki K."/>
            <person name="Watahiki A."/>
            <person name="Okamura-Oho Y."/>
            <person name="Suzuki H."/>
            <person name="Kawai J."/>
            <person name="Hayashizaki Y."/>
        </authorList>
    </citation>
    <scope>NUCLEOTIDE SEQUENCE [LARGE SCALE MRNA] OF 1-784 (ISOFORMS 1/2)</scope>
    <source>
        <strain>C57BL/6J</strain>
        <tissue>Testis</tissue>
        <tissue>Thymus</tissue>
    </source>
</reference>
<reference key="7">
    <citation type="journal article" date="1993" name="Proc. Natl. Acad. Sci. U.S.A.">
        <title>Identification of four murine cDNAs encoding putative protein kinases from primitive embryonic stem cells differentiated in vitro.</title>
        <authorList>
            <person name="Biesecker L.G."/>
            <person name="Gottschalk L.R."/>
            <person name="Emerson S.G."/>
        </authorList>
    </citation>
    <scope>NUCLEOTIDE SEQUENCE [MRNA] OF 157-201</scope>
    <scope>TISSUE SPECIFICITY</scope>
</reference>
<reference key="8">
    <citation type="journal article" date="2007" name="Proc. Natl. Acad. Sci. U.S.A.">
        <title>Large-scale phosphorylation analysis of mouse liver.</title>
        <authorList>
            <person name="Villen J."/>
            <person name="Beausoleil S.A."/>
            <person name="Gerber S.A."/>
            <person name="Gygi S.P."/>
        </authorList>
    </citation>
    <scope>PHOSPHORYLATION [LARGE SCALE ANALYSIS] AT SER-189</scope>
    <scope>IDENTIFICATION BY MASS SPECTROMETRY [LARGE SCALE ANALYSIS]</scope>
    <source>
        <tissue>Liver</tissue>
    </source>
</reference>
<reference key="9">
    <citation type="journal article" date="2007" name="Science">
        <title>ATM and ATR substrate analysis reveals extensive protein networks responsive to DNA damage.</title>
        <authorList>
            <person name="Matsuoka S."/>
            <person name="Ballif B.A."/>
            <person name="Smogorzewska A."/>
            <person name="McDonald E.R. III"/>
            <person name="Hurov K.E."/>
            <person name="Luo J."/>
            <person name="Bakalarski C.E."/>
            <person name="Zhao Z."/>
            <person name="Solimini N."/>
            <person name="Lerenthal Y."/>
            <person name="Shiloh Y."/>
            <person name="Gygi S.P."/>
            <person name="Elledge S.J."/>
        </authorList>
    </citation>
    <scope>PHOSPHORYLATION [LARGE SCALE ANALYSIS] AT SER-354</scope>
    <scope>IDENTIFICATION BY MASS SPECTROMETRY [LARGE SCALE ANALYSIS]</scope>
    <source>
        <tissue>Embryonic fibroblast</tissue>
    </source>
</reference>
<reference key="10">
    <citation type="journal article" date="2009" name="Mol. Cell. Proteomics">
        <title>Large scale localization of protein phosphorylation by use of electron capture dissociation mass spectrometry.</title>
        <authorList>
            <person name="Sweet S.M."/>
            <person name="Bailey C.M."/>
            <person name="Cunningham D.L."/>
            <person name="Heath J.K."/>
            <person name="Cooper H.J."/>
        </authorList>
    </citation>
    <scope>IDENTIFICATION BY MASS SPECTROMETRY [LARGE SCALE ANALYSIS]</scope>
    <source>
        <tissue>Embryonic fibroblast</tissue>
    </source>
</reference>
<reference key="11">
    <citation type="journal article" date="2010" name="Cell">
        <title>A tissue-specific atlas of mouse protein phosphorylation and expression.</title>
        <authorList>
            <person name="Huttlin E.L."/>
            <person name="Jedrychowski M.P."/>
            <person name="Elias J.E."/>
            <person name="Goswami T."/>
            <person name="Rad R."/>
            <person name="Beausoleil S.A."/>
            <person name="Villen J."/>
            <person name="Haas W."/>
            <person name="Sowa M.E."/>
            <person name="Gygi S.P."/>
        </authorList>
    </citation>
    <scope>PHOSPHORYLATION [LARGE SCALE ANALYSIS] AT THR-183; SER-189; SER-344; SER-347; SER-348; SER-354; SER-543; SER-643; SER-647; SER-666; SER-777; THR-812 AND SER-816</scope>
    <scope>IDENTIFICATION BY MASS SPECTROMETRY [LARGE SCALE ANALYSIS]</scope>
    <source>
        <tissue>Brain</tissue>
        <tissue>Brown adipose tissue</tissue>
        <tissue>Heart</tissue>
        <tissue>Kidney</tissue>
        <tissue>Liver</tissue>
        <tissue>Lung</tissue>
        <tissue>Pancreas</tissue>
        <tissue>Spleen</tissue>
        <tissue>Testis</tissue>
    </source>
</reference>
<sequence length="1233" mass="141457">MSFFNFRKIFKLGSEKKKKQYEHVKRDLNPEEFWEIIGELGDGAFGKVYKAQNKETNVLAAAKVIDTKSEEELEDYMVEIDILASCDHPNIVKLLDAFYYENNLWILIEFCAGGAVDAVMLELERPLTESQIQVVCKQTLEALNYLHDNKIIHRDLKAGNILFTLDGDIKLADFGVSAKNTRTIQRRDSFIGTPYWMAPEVVMCETSKDRPYDYKADVWSLGITLIEMAEIEPPHHELNPMRVLLKIAKSEPPTLAQPSKWSSNFKDFLRKCLEKNVDARWTTSQLLQHPFVTVDSNKPVRELIAEAKAEVTEEVEDGKEEDEEEEAENALPIPANKRASSDLSIASSEEDKLSQNACILESVSERTEQSTSEDKFSNKILNEKPTTDGPEKAVDEHASDVNLETGAELNDQTVGIHENGREKKRPKLENLPDTQDQQTVDVNSVSEENENNRVTLETNTDCLKPEEDRNKENQETLESKLIQSEEINDTHIQTMDLVSQETGEKEADFQAVDNEVGLTKEETQEKLGKDGTAQKVITSDRSSEVGTDEALDDTQKAAELSKAAQSGEGDEALAPTQTLAEKPTEGPEAGGAEEEPPGGERVEDKQPEQQPAVCEAEGQLTSTSETTRATLEQPETDEVEQVSESNSIEELERLVVTGAEARALGSEGEAAATEVDLERKENAQKVPVKAESQAPAASQPSEPHPVLIPSININSETTENKEEMGALPKPETILPPEPEHEKGNDTDSGTGSTVENSSGDLNLSISSFLSKAKDSGSVSLQETRRQKKTLKKTRKFIVDGVEVSVTTSKIVTDSDSKTEELRFLRRQELRELRLLQKEEQRAQQQLNGKLQQQREQIFRRFEQEMLSKKRQYDQEIENLEKQQKQTIERLEQEHTNRLRDEAKRIKGEQEKELSKFQNVLKNRKKEVMNEVEKAPRELRRELTKRRKEELAQSQHAQEQEFVQKQQQELDGSLKKIIQQQKAELANIERECLNNKQQLMRAREAAIWELEERHLQEKHQLLKQQLKDQYFMQRHQLLKRHEKETEQMQRYNQRLIEELKNRQTQERARLPKIQRSEAKTRMAMFKKSLRINSTATPDQDREKIKQFAAQEEKRQKNERMAQHQKHESQMRDLQLQCEANVRELHQLQNEKCHLLVEHETQKLKELDEEHSQELKEWREKLRPRKKTLEEEFARKLQEQEVFFKMTGESECLNPSAQSRISKFYPIPTLHSTGS</sequence>
<keyword id="KW-0025">Alternative splicing</keyword>
<keyword id="KW-0053">Apoptosis</keyword>
<keyword id="KW-0067">ATP-binding</keyword>
<keyword id="KW-0175">Coiled coil</keyword>
<keyword id="KW-0963">Cytoplasm</keyword>
<keyword id="KW-0418">Kinase</keyword>
<keyword id="KW-0547">Nucleotide-binding</keyword>
<keyword id="KW-0597">Phosphoprotein</keyword>
<keyword id="KW-1185">Reference proteome</keyword>
<keyword id="KW-0723">Serine/threonine-protein kinase</keyword>
<keyword id="KW-0808">Transferase</keyword>
<accession>O54988</accession>
<accession>A2RRK4</accession>
<accession>Q80U65</accession>
<accession>Q8CAU2</accession>
<accession>Q8CDW2</accession>
<accession>Q9WU41</accession>
<protein>
    <recommendedName>
        <fullName>STE20-like serine/threonine-protein kinase</fullName>
        <shortName>STE20-like kinase</shortName>
        <shortName>mSLK</shortName>
        <ecNumber>2.7.11.1</ecNumber>
    </recommendedName>
    <alternativeName>
        <fullName>Etk4</fullName>
    </alternativeName>
    <alternativeName>
        <fullName>STE20-related kinase SMAK</fullName>
    </alternativeName>
    <alternativeName>
        <fullName>STE20-related serine/threonine-protein kinase</fullName>
        <shortName>STE20-related kinase</shortName>
    </alternativeName>
    <alternativeName>
        <fullName>Serine/threonine-protein kinase 2</fullName>
    </alternativeName>
</protein>